<proteinExistence type="evidence at protein level"/>
<dbReference type="SMR" id="P84843"/>
<dbReference type="GO" id="GO:0005576">
    <property type="term" value="C:extracellular region"/>
    <property type="evidence" value="ECO:0000314"/>
    <property type="project" value="UniProtKB"/>
</dbReference>
<dbReference type="GO" id="GO:0019855">
    <property type="term" value="F:calcium channel inhibitor activity"/>
    <property type="evidence" value="ECO:0000314"/>
    <property type="project" value="UniProtKB"/>
</dbReference>
<dbReference type="GO" id="GO:0090729">
    <property type="term" value="F:toxin activity"/>
    <property type="evidence" value="ECO:0007669"/>
    <property type="project" value="UniProtKB-KW"/>
</dbReference>
<dbReference type="GO" id="GO:0005245">
    <property type="term" value="F:voltage-gated calcium channel activity"/>
    <property type="evidence" value="ECO:0000314"/>
    <property type="project" value="UniProtKB"/>
</dbReference>
<dbReference type="GO" id="GO:0045986">
    <property type="term" value="P:negative regulation of smooth muscle contraction"/>
    <property type="evidence" value="ECO:0000314"/>
    <property type="project" value="UniProtKB"/>
</dbReference>
<dbReference type="GO" id="GO:0042311">
    <property type="term" value="P:vasodilation"/>
    <property type="evidence" value="ECO:0007669"/>
    <property type="project" value="UniProtKB-KW"/>
</dbReference>
<dbReference type="CDD" id="cd00104">
    <property type="entry name" value="KAZAL_FS"/>
    <property type="match status" value="1"/>
</dbReference>
<dbReference type="Gene3D" id="3.30.60.30">
    <property type="match status" value="1"/>
</dbReference>
<dbReference type="InterPro" id="IPR002350">
    <property type="entry name" value="Kazal_dom"/>
</dbReference>
<dbReference type="InterPro" id="IPR036058">
    <property type="entry name" value="Kazal_dom_sf"/>
</dbReference>
<dbReference type="Pfam" id="PF00050">
    <property type="entry name" value="Kazal_1"/>
    <property type="match status" value="1"/>
</dbReference>
<dbReference type="SMART" id="SM00280">
    <property type="entry name" value="KAZAL"/>
    <property type="match status" value="1"/>
</dbReference>
<dbReference type="SUPFAM" id="SSF100895">
    <property type="entry name" value="Kazal-type serine protease inhibitors"/>
    <property type="match status" value="1"/>
</dbReference>
<dbReference type="PROSITE" id="PS51465">
    <property type="entry name" value="KAZAL_2"/>
    <property type="match status" value="1"/>
</dbReference>
<evidence type="ECO:0000255" key="1">
    <source>
        <dbReference type="PROSITE-ProRule" id="PRU00798"/>
    </source>
</evidence>
<evidence type="ECO:0000269" key="2">
    <source>
    </source>
</evidence>
<evidence type="ECO:0000303" key="3">
    <source>
    </source>
</evidence>
<evidence type="ECO:0000305" key="4"/>
<keyword id="KW-0108">Calcium channel impairing toxin</keyword>
<keyword id="KW-0903">Direct protein sequencing</keyword>
<keyword id="KW-1015">Disulfide bond</keyword>
<keyword id="KW-0872">Ion channel impairing toxin</keyword>
<keyword id="KW-0964">Secreted</keyword>
<keyword id="KW-0732">Signal</keyword>
<keyword id="KW-0800">Toxin</keyword>
<keyword id="KW-0838">Vasoactive</keyword>
<keyword id="KW-0840">Vasodilator</keyword>
<keyword id="KW-1218">Voltage-gated calcium channel impairing toxin</keyword>
<name>VASOT_HYBBI</name>
<protein>
    <recommendedName>
        <fullName evidence="3">Vasotab</fullName>
    </recommendedName>
</protein>
<comment type="function">
    <text evidence="2">Vasodilator protein that inhibits vasoconstriction of isolated rat femoral artery induced by phenylephrine. Since platelet aggregation and vasoconstriction are key hemostatic responses, particularly in small wounds, this protein likely participates in the antihemostatic responses during blood feeding. Blocks L-type calcium channels (Cav1/CACNA1) in left ventricular myocytes isolated from rat hearts.</text>
</comment>
<comment type="subcellular location">
    <subcellularLocation>
        <location evidence="2">Secreted</location>
    </subcellularLocation>
</comment>
<comment type="tissue specificity">
    <text evidence="2">Expressed by the salivary gland.</text>
</comment>
<comment type="mass spectrometry"/>
<reference evidence="4" key="1">
    <citation type="journal article" date="2006" name="J. Exp. Biol.">
        <title>Vasotab, a vasoactive peptide from horse fly Hybomitra bimaculata (Diptera, Tabanidae) salivary glands.</title>
        <authorList>
            <person name="Takac P."/>
            <person name="Nunn M.A."/>
            <person name="Meszaros J."/>
            <person name="Pechanova O."/>
            <person name="Vrbjar N."/>
            <person name="Vlasakova P."/>
            <person name="Kozanek M."/>
            <person name="Kazimirova M."/>
            <person name="Hart G."/>
            <person name="Nuttall P.A."/>
            <person name="Labuda M."/>
        </authorList>
    </citation>
    <scope>NUCLEOTIDE SEQUENCE [MRNA]</scope>
    <scope>PROTEIN SEQUENCE OF 21-67</scope>
    <scope>FUNCTION</scope>
    <scope>SUBCELLULAR LOCATION</scope>
    <scope>TISSUE SPECIFICITY</scope>
    <scope>MASS SPECTROMETRY</scope>
    <source>
        <tissue>Salivary gland</tissue>
    </source>
</reference>
<feature type="signal peptide" evidence="2">
    <location>
        <begin position="1"/>
        <end position="20"/>
    </location>
</feature>
<feature type="chain" id="PRO_0000233909" description="Vasotab" evidence="2">
    <location>
        <begin position="21"/>
        <end position="76"/>
    </location>
</feature>
<feature type="domain" description="Kazal-like" evidence="1">
    <location>
        <begin position="21"/>
        <end position="76"/>
    </location>
</feature>
<feature type="disulfide bond" evidence="1 2">
    <location>
        <begin position="23"/>
        <end position="60"/>
    </location>
</feature>
<feature type="disulfide bond" evidence="1 2">
    <location>
        <begin position="27"/>
        <end position="53"/>
    </location>
</feature>
<feature type="disulfide bond" evidence="1 2">
    <location>
        <begin position="35"/>
        <end position="75"/>
    </location>
</feature>
<accession>P84843</accession>
<organism>
    <name type="scientific">Hybomitra bimaculata</name>
    <name type="common">Horse fly</name>
    <dbReference type="NCBI Taxonomy" id="226809"/>
    <lineage>
        <taxon>Eukaryota</taxon>
        <taxon>Metazoa</taxon>
        <taxon>Ecdysozoa</taxon>
        <taxon>Arthropoda</taxon>
        <taxon>Hexapoda</taxon>
        <taxon>Insecta</taxon>
        <taxon>Pterygota</taxon>
        <taxon>Neoptera</taxon>
        <taxon>Endopterygota</taxon>
        <taxon>Diptera</taxon>
        <taxon>Brachycera</taxon>
        <taxon>Tabanomorpha</taxon>
        <taxon>Tabanoidea</taxon>
        <taxon>Tabanidae</taxon>
        <taxon>Hybomitra</taxon>
    </lineage>
</organism>
<sequence>MKFALFSVLVVLLIATFVAADECPRICTADYRPVCGTPSGGRRSANRTFGNQCSLNAHNCLNKGDTYDKLHDGECK</sequence>